<reference key="1">
    <citation type="journal article" date="2011" name="BMC Genomics">
        <title>Complete genome sequence of the filamentous anoxygenic phototrophic bacterium Chloroflexus aurantiacus.</title>
        <authorList>
            <person name="Tang K.H."/>
            <person name="Barry K."/>
            <person name="Chertkov O."/>
            <person name="Dalin E."/>
            <person name="Han C.S."/>
            <person name="Hauser L.J."/>
            <person name="Honchak B.M."/>
            <person name="Karbach L.E."/>
            <person name="Land M.L."/>
            <person name="Lapidus A."/>
            <person name="Larimer F.W."/>
            <person name="Mikhailova N."/>
            <person name="Pitluck S."/>
            <person name="Pierson B.K."/>
            <person name="Blankenship R.E."/>
        </authorList>
    </citation>
    <scope>NUCLEOTIDE SEQUENCE [LARGE SCALE GENOMIC DNA]</scope>
    <source>
        <strain>ATCC 29366 / DSM 635 / J-10-fl</strain>
    </source>
</reference>
<accession>A9WAL0</accession>
<comment type="function">
    <text evidence="1">Catalyzes the reversible phosphorylation of S-methyl-5'-thioadenosine (MTA) to adenine and 5-methylthioribose-1-phosphate. Involved in the breakdown of MTA, a major by-product of polyamine biosynthesis. Responsible for the first step in the methionine salvage pathway after MTA has been generated from S-adenosylmethionine. Has broad substrate specificity with 6-aminopurine nucleosides as preferred substrates.</text>
</comment>
<comment type="catalytic activity">
    <reaction evidence="1">
        <text>S-methyl-5'-thioadenosine + phosphate = 5-(methylsulfanyl)-alpha-D-ribose 1-phosphate + adenine</text>
        <dbReference type="Rhea" id="RHEA:11852"/>
        <dbReference type="ChEBI" id="CHEBI:16708"/>
        <dbReference type="ChEBI" id="CHEBI:17509"/>
        <dbReference type="ChEBI" id="CHEBI:43474"/>
        <dbReference type="ChEBI" id="CHEBI:58533"/>
        <dbReference type="EC" id="2.4.2.28"/>
    </reaction>
</comment>
<comment type="pathway">
    <text evidence="1">Amino-acid biosynthesis; L-methionine biosynthesis via salvage pathway; S-methyl-5-thio-alpha-D-ribose 1-phosphate from S-methyl-5'-thioadenosine (phosphorylase route): step 1/1.</text>
</comment>
<comment type="subunit">
    <text evidence="1">Homohexamer. Dimer of a homotrimer.</text>
</comment>
<comment type="similarity">
    <text evidence="1">Belongs to the PNP/MTAP phosphorylase family. MTAP subfamily.</text>
</comment>
<protein>
    <recommendedName>
        <fullName evidence="1">S-methyl-5'-thioadenosine phosphorylase</fullName>
        <ecNumber evidence="1">2.4.2.28</ecNumber>
    </recommendedName>
    <alternativeName>
        <fullName evidence="1">5'-methylthioadenosine phosphorylase</fullName>
        <shortName evidence="1">MTA phosphorylase</shortName>
        <shortName evidence="1">MTAP</shortName>
    </alternativeName>
</protein>
<keyword id="KW-0328">Glycosyltransferase</keyword>
<keyword id="KW-0660">Purine salvage</keyword>
<keyword id="KW-1185">Reference proteome</keyword>
<keyword id="KW-0808">Transferase</keyword>
<organism>
    <name type="scientific">Chloroflexus aurantiacus (strain ATCC 29366 / DSM 635 / J-10-fl)</name>
    <dbReference type="NCBI Taxonomy" id="324602"/>
    <lineage>
        <taxon>Bacteria</taxon>
        <taxon>Bacillati</taxon>
        <taxon>Chloroflexota</taxon>
        <taxon>Chloroflexia</taxon>
        <taxon>Chloroflexales</taxon>
        <taxon>Chloroflexineae</taxon>
        <taxon>Chloroflexaceae</taxon>
        <taxon>Chloroflexus</taxon>
    </lineage>
</organism>
<gene>
    <name evidence="1" type="primary">mtnP</name>
    <name type="ordered locus">Caur_3616</name>
</gene>
<dbReference type="EC" id="2.4.2.28" evidence="1"/>
<dbReference type="EMBL" id="CP000909">
    <property type="protein sequence ID" value="ABY36800.1"/>
    <property type="molecule type" value="Genomic_DNA"/>
</dbReference>
<dbReference type="RefSeq" id="WP_012259453.1">
    <property type="nucleotide sequence ID" value="NC_010175.1"/>
</dbReference>
<dbReference type="RefSeq" id="YP_001637189.1">
    <property type="nucleotide sequence ID" value="NC_010175.1"/>
</dbReference>
<dbReference type="SMR" id="A9WAL0"/>
<dbReference type="STRING" id="324602.Caur_3616"/>
<dbReference type="EnsemblBacteria" id="ABY36800">
    <property type="protein sequence ID" value="ABY36800"/>
    <property type="gene ID" value="Caur_3616"/>
</dbReference>
<dbReference type="KEGG" id="cau:Caur_3616"/>
<dbReference type="PATRIC" id="fig|324602.8.peg.4071"/>
<dbReference type="eggNOG" id="COG0005">
    <property type="taxonomic scope" value="Bacteria"/>
</dbReference>
<dbReference type="HOGENOM" id="CLU_054456_0_2_0"/>
<dbReference type="InParanoid" id="A9WAL0"/>
<dbReference type="UniPathway" id="UPA00904">
    <property type="reaction ID" value="UER00873"/>
</dbReference>
<dbReference type="Proteomes" id="UP000002008">
    <property type="component" value="Chromosome"/>
</dbReference>
<dbReference type="GO" id="GO:0005829">
    <property type="term" value="C:cytosol"/>
    <property type="evidence" value="ECO:0000318"/>
    <property type="project" value="GO_Central"/>
</dbReference>
<dbReference type="GO" id="GO:0017061">
    <property type="term" value="F:S-methyl-5-thioadenosine phosphorylase activity"/>
    <property type="evidence" value="ECO:0000318"/>
    <property type="project" value="GO_Central"/>
</dbReference>
<dbReference type="GO" id="GO:0019509">
    <property type="term" value="P:L-methionine salvage from methylthioadenosine"/>
    <property type="evidence" value="ECO:0000318"/>
    <property type="project" value="GO_Central"/>
</dbReference>
<dbReference type="GO" id="GO:0006166">
    <property type="term" value="P:purine ribonucleoside salvage"/>
    <property type="evidence" value="ECO:0007669"/>
    <property type="project" value="UniProtKB-KW"/>
</dbReference>
<dbReference type="CDD" id="cd09010">
    <property type="entry name" value="MTAP_SsMTAPII_like_MTIP"/>
    <property type="match status" value="1"/>
</dbReference>
<dbReference type="FunFam" id="3.40.50.1580:FF:000012">
    <property type="entry name" value="Probable 6-oxopurine nucleoside phosphorylase"/>
    <property type="match status" value="1"/>
</dbReference>
<dbReference type="Gene3D" id="3.40.50.1580">
    <property type="entry name" value="Nucleoside phosphorylase domain"/>
    <property type="match status" value="1"/>
</dbReference>
<dbReference type="HAMAP" id="MF_01963">
    <property type="entry name" value="MTAP"/>
    <property type="match status" value="1"/>
</dbReference>
<dbReference type="InterPro" id="IPR010044">
    <property type="entry name" value="MTAP"/>
</dbReference>
<dbReference type="InterPro" id="IPR000845">
    <property type="entry name" value="Nucleoside_phosphorylase_d"/>
</dbReference>
<dbReference type="InterPro" id="IPR035994">
    <property type="entry name" value="Nucleoside_phosphorylase_sf"/>
</dbReference>
<dbReference type="InterPro" id="IPR018099">
    <property type="entry name" value="Purine_phosphorylase-2_CS"/>
</dbReference>
<dbReference type="NCBIfam" id="TIGR01694">
    <property type="entry name" value="MTAP"/>
    <property type="match status" value="1"/>
</dbReference>
<dbReference type="PANTHER" id="PTHR42679">
    <property type="entry name" value="S-METHYL-5'-THIOADENOSINE PHOSPHORYLASE"/>
    <property type="match status" value="1"/>
</dbReference>
<dbReference type="PANTHER" id="PTHR42679:SF2">
    <property type="entry name" value="S-METHYL-5'-THIOADENOSINE PHOSPHORYLASE"/>
    <property type="match status" value="1"/>
</dbReference>
<dbReference type="Pfam" id="PF01048">
    <property type="entry name" value="PNP_UDP_1"/>
    <property type="match status" value="1"/>
</dbReference>
<dbReference type="SUPFAM" id="SSF53167">
    <property type="entry name" value="Purine and uridine phosphorylases"/>
    <property type="match status" value="1"/>
</dbReference>
<dbReference type="PROSITE" id="PS01240">
    <property type="entry name" value="PNP_MTAP_2"/>
    <property type="match status" value="1"/>
</dbReference>
<feature type="chain" id="PRO_0000415091" description="S-methyl-5'-thioadenosine phosphorylase">
    <location>
        <begin position="1"/>
        <end position="288"/>
    </location>
</feature>
<feature type="binding site" evidence="1">
    <location>
        <position position="12"/>
    </location>
    <ligand>
        <name>phosphate</name>
        <dbReference type="ChEBI" id="CHEBI:43474"/>
    </ligand>
</feature>
<feature type="binding site" evidence="1">
    <location>
        <begin position="54"/>
        <end position="55"/>
    </location>
    <ligand>
        <name>phosphate</name>
        <dbReference type="ChEBI" id="CHEBI:43474"/>
    </ligand>
</feature>
<feature type="binding site" evidence="1">
    <location>
        <begin position="87"/>
        <end position="88"/>
    </location>
    <ligand>
        <name>phosphate</name>
        <dbReference type="ChEBI" id="CHEBI:43474"/>
    </ligand>
</feature>
<feature type="binding site" evidence="1">
    <location>
        <position position="186"/>
    </location>
    <ligand>
        <name>substrate</name>
    </ligand>
</feature>
<feature type="binding site" evidence="1">
    <location>
        <position position="187"/>
    </location>
    <ligand>
        <name>phosphate</name>
        <dbReference type="ChEBI" id="CHEBI:43474"/>
    </ligand>
</feature>
<feature type="binding site" evidence="1">
    <location>
        <begin position="210"/>
        <end position="212"/>
    </location>
    <ligand>
        <name>substrate</name>
    </ligand>
</feature>
<feature type="site" description="Important for substrate specificity" evidence="1">
    <location>
        <position position="168"/>
    </location>
</feature>
<feature type="site" description="Important for substrate specificity" evidence="1">
    <location>
        <position position="223"/>
    </location>
</feature>
<name>MTAP_CHLAA</name>
<sequence>MHSATIGVIGGSGLYAMPDLKNPEEVRLTTPFGDPSDAFIIGELEGRRVAFLPRHGRGHRLNPSEVPARANIYAFKLLGVRALISVSAVGSLREDYAPGHAVIPDQIFDRTKGIRPATFFEGGVVAHVAFDRPFCPYLSNILLHAAQAAGAVVHQGGTLVVMEGPQFSTKAESEENRRRGHSLIGMTALPEAKLAREAEIAYATLAMVTDYDVWHPEHDAVTAEQVIKVLSANVNLSQQIVRHAVAQIDENFTSPAHDALRYAIVTHPDHIPAAVKERLAPIAGRYWS</sequence>
<evidence type="ECO:0000255" key="1">
    <source>
        <dbReference type="HAMAP-Rule" id="MF_01963"/>
    </source>
</evidence>
<proteinExistence type="inferred from homology"/>